<keyword id="KW-0963">Cytoplasm</keyword>
<keyword id="KW-0378">Hydrolase</keyword>
<keyword id="KW-0645">Protease</keyword>
<keyword id="KW-1185">Reference proteome</keyword>
<keyword id="KW-0720">Serine protease</keyword>
<name>CLPP_CAMHC</name>
<evidence type="ECO:0000255" key="1">
    <source>
        <dbReference type="HAMAP-Rule" id="MF_00444"/>
    </source>
</evidence>
<comment type="function">
    <text evidence="1">Cleaves peptides in various proteins in a process that requires ATP hydrolysis. Has a chymotrypsin-like activity. Plays a major role in the degradation of misfolded proteins.</text>
</comment>
<comment type="catalytic activity">
    <reaction evidence="1">
        <text>Hydrolysis of proteins to small peptides in the presence of ATP and magnesium. alpha-casein is the usual test substrate. In the absence of ATP, only oligopeptides shorter than five residues are hydrolyzed (such as succinyl-Leu-Tyr-|-NHMec, and Leu-Tyr-Leu-|-Tyr-Trp, in which cleavage of the -Tyr-|-Leu- and -Tyr-|-Trp bonds also occurs).</text>
        <dbReference type="EC" id="3.4.21.92"/>
    </reaction>
</comment>
<comment type="subunit">
    <text evidence="1">Fourteen ClpP subunits assemble into 2 heptameric rings which stack back to back to give a disk-like structure with a central cavity, resembling the structure of eukaryotic proteasomes.</text>
</comment>
<comment type="subcellular location">
    <subcellularLocation>
        <location evidence="1">Cytoplasm</location>
    </subcellularLocation>
</comment>
<comment type="similarity">
    <text evidence="1">Belongs to the peptidase S14 family.</text>
</comment>
<proteinExistence type="inferred from homology"/>
<protein>
    <recommendedName>
        <fullName evidence="1">ATP-dependent Clp protease proteolytic subunit</fullName>
        <ecNumber evidence="1">3.4.21.92</ecNumber>
    </recommendedName>
    <alternativeName>
        <fullName evidence="1">Endopeptidase Clp</fullName>
    </alternativeName>
</protein>
<feature type="chain" id="PRO_1000026077" description="ATP-dependent Clp protease proteolytic subunit">
    <location>
        <begin position="1"/>
        <end position="195"/>
    </location>
</feature>
<feature type="active site" description="Nucleophile" evidence="1">
    <location>
        <position position="97"/>
    </location>
</feature>
<feature type="active site" evidence="1">
    <location>
        <position position="122"/>
    </location>
</feature>
<dbReference type="EC" id="3.4.21.92" evidence="1"/>
<dbReference type="EMBL" id="CP000776">
    <property type="protein sequence ID" value="ABS51876.1"/>
    <property type="molecule type" value="Genomic_DNA"/>
</dbReference>
<dbReference type="RefSeq" id="WP_011991486.1">
    <property type="nucleotide sequence ID" value="NC_009714.1"/>
</dbReference>
<dbReference type="SMR" id="A7HZE8"/>
<dbReference type="STRING" id="360107.CHAB381_0017"/>
<dbReference type="MEROPS" id="S14.001"/>
<dbReference type="KEGG" id="cha:CHAB381_0017"/>
<dbReference type="eggNOG" id="COG0740">
    <property type="taxonomic scope" value="Bacteria"/>
</dbReference>
<dbReference type="HOGENOM" id="CLU_058707_3_2_7"/>
<dbReference type="OrthoDB" id="9802800at2"/>
<dbReference type="Proteomes" id="UP000002407">
    <property type="component" value="Chromosome"/>
</dbReference>
<dbReference type="GO" id="GO:0005737">
    <property type="term" value="C:cytoplasm"/>
    <property type="evidence" value="ECO:0007669"/>
    <property type="project" value="UniProtKB-SubCell"/>
</dbReference>
<dbReference type="GO" id="GO:0009368">
    <property type="term" value="C:endopeptidase Clp complex"/>
    <property type="evidence" value="ECO:0007669"/>
    <property type="project" value="TreeGrafter"/>
</dbReference>
<dbReference type="GO" id="GO:0004176">
    <property type="term" value="F:ATP-dependent peptidase activity"/>
    <property type="evidence" value="ECO:0007669"/>
    <property type="project" value="InterPro"/>
</dbReference>
<dbReference type="GO" id="GO:0051117">
    <property type="term" value="F:ATPase binding"/>
    <property type="evidence" value="ECO:0007669"/>
    <property type="project" value="TreeGrafter"/>
</dbReference>
<dbReference type="GO" id="GO:0004252">
    <property type="term" value="F:serine-type endopeptidase activity"/>
    <property type="evidence" value="ECO:0007669"/>
    <property type="project" value="UniProtKB-UniRule"/>
</dbReference>
<dbReference type="GO" id="GO:0006515">
    <property type="term" value="P:protein quality control for misfolded or incompletely synthesized proteins"/>
    <property type="evidence" value="ECO:0007669"/>
    <property type="project" value="TreeGrafter"/>
</dbReference>
<dbReference type="CDD" id="cd07017">
    <property type="entry name" value="S14_ClpP_2"/>
    <property type="match status" value="1"/>
</dbReference>
<dbReference type="FunFam" id="3.90.226.10:FF:000001">
    <property type="entry name" value="ATP-dependent Clp protease proteolytic subunit"/>
    <property type="match status" value="1"/>
</dbReference>
<dbReference type="Gene3D" id="3.90.226.10">
    <property type="entry name" value="2-enoyl-CoA Hydratase, Chain A, domain 1"/>
    <property type="match status" value="1"/>
</dbReference>
<dbReference type="HAMAP" id="MF_00444">
    <property type="entry name" value="ClpP"/>
    <property type="match status" value="1"/>
</dbReference>
<dbReference type="InterPro" id="IPR001907">
    <property type="entry name" value="ClpP"/>
</dbReference>
<dbReference type="InterPro" id="IPR029045">
    <property type="entry name" value="ClpP/crotonase-like_dom_sf"/>
</dbReference>
<dbReference type="InterPro" id="IPR023562">
    <property type="entry name" value="ClpP/TepA"/>
</dbReference>
<dbReference type="InterPro" id="IPR033135">
    <property type="entry name" value="ClpP_His_AS"/>
</dbReference>
<dbReference type="InterPro" id="IPR018215">
    <property type="entry name" value="ClpP_Ser_AS"/>
</dbReference>
<dbReference type="NCBIfam" id="TIGR00493">
    <property type="entry name" value="clpP"/>
    <property type="match status" value="1"/>
</dbReference>
<dbReference type="NCBIfam" id="NF001368">
    <property type="entry name" value="PRK00277.1"/>
    <property type="match status" value="1"/>
</dbReference>
<dbReference type="NCBIfam" id="NF009205">
    <property type="entry name" value="PRK12553.1"/>
    <property type="match status" value="1"/>
</dbReference>
<dbReference type="PANTHER" id="PTHR10381">
    <property type="entry name" value="ATP-DEPENDENT CLP PROTEASE PROTEOLYTIC SUBUNIT"/>
    <property type="match status" value="1"/>
</dbReference>
<dbReference type="PANTHER" id="PTHR10381:SF70">
    <property type="entry name" value="ATP-DEPENDENT CLP PROTEASE PROTEOLYTIC SUBUNIT"/>
    <property type="match status" value="1"/>
</dbReference>
<dbReference type="Pfam" id="PF00574">
    <property type="entry name" value="CLP_protease"/>
    <property type="match status" value="1"/>
</dbReference>
<dbReference type="PRINTS" id="PR00127">
    <property type="entry name" value="CLPPROTEASEP"/>
</dbReference>
<dbReference type="SUPFAM" id="SSF52096">
    <property type="entry name" value="ClpP/crotonase"/>
    <property type="match status" value="1"/>
</dbReference>
<dbReference type="PROSITE" id="PS00382">
    <property type="entry name" value="CLP_PROTEASE_HIS"/>
    <property type="match status" value="1"/>
</dbReference>
<dbReference type="PROSITE" id="PS00381">
    <property type="entry name" value="CLP_PROTEASE_SER"/>
    <property type="match status" value="1"/>
</dbReference>
<accession>A7HZE8</accession>
<reference key="1">
    <citation type="submission" date="2007-07" db="EMBL/GenBank/DDBJ databases">
        <title>Complete genome sequence of Campylobacter hominis ATCC BAA-381, a commensal isolated from the human gastrointestinal tract.</title>
        <authorList>
            <person name="Fouts D.E."/>
            <person name="Mongodin E.F."/>
            <person name="Puiu D."/>
            <person name="Sebastian Y."/>
            <person name="Miller W.G."/>
            <person name="Mandrell R.E."/>
            <person name="Nelson K.E."/>
        </authorList>
    </citation>
    <scope>NUCLEOTIDE SEQUENCE [LARGE SCALE GENOMIC DNA]</scope>
    <source>
        <strain>ATCC BAA-381 / DSM 21671 / CCUG 45161 / LMG 19568 / NCTC 13146 / CH001A</strain>
    </source>
</reference>
<sequence length="195" mass="21616">MFVPYVIERTSRGERSYDIYSRLLKDRIVMLSGEINDEVASSVVAQLLFLEAEDPDKDIYLYINSPGGVVTSGFSIYDTMNYIKPAVSTICIGQAASMGAFLLSCGEKGKRYALPNARIMIHQPLGGAQGQATDIEITTKEILRIKATLNKILAENSGQKLSKIEKDTDRDFYMSAQEAVKYGLIDKVLEKSLTE</sequence>
<gene>
    <name evidence="1" type="primary">clpP</name>
    <name type="ordered locus">CHAB381_0017</name>
</gene>
<organism>
    <name type="scientific">Campylobacter hominis (strain ATCC BAA-381 / DSM 21671 / CCUG 45161 / LMG 19568 / NCTC 13146 / CH001A)</name>
    <dbReference type="NCBI Taxonomy" id="360107"/>
    <lineage>
        <taxon>Bacteria</taxon>
        <taxon>Pseudomonadati</taxon>
        <taxon>Campylobacterota</taxon>
        <taxon>Epsilonproteobacteria</taxon>
        <taxon>Campylobacterales</taxon>
        <taxon>Campylobacteraceae</taxon>
        <taxon>Campylobacter</taxon>
    </lineage>
</organism>